<name>USPL1_ARATH</name>
<gene>
    <name evidence="7" type="primary">USPL1</name>
    <name evidence="8" type="ordered locus">At1g49320</name>
    <name evidence="9" type="ORF">F13F21.25</name>
</gene>
<feature type="signal peptide" evidence="1">
    <location>
        <begin position="1"/>
        <end position="24"/>
    </location>
</feature>
<feature type="chain" id="PRO_5005944492" description="BURP domain protein USPL1" evidence="1">
    <location>
        <begin position="25"/>
        <end position="280"/>
    </location>
</feature>
<feature type="domain" description="BURP" evidence="2">
    <location>
        <begin position="58"/>
        <end position="280"/>
    </location>
</feature>
<reference key="1">
    <citation type="journal article" date="2000" name="Nature">
        <title>Sequence and analysis of chromosome 1 of the plant Arabidopsis thaliana.</title>
        <authorList>
            <person name="Theologis A."/>
            <person name="Ecker J.R."/>
            <person name="Palm C.J."/>
            <person name="Federspiel N.A."/>
            <person name="Kaul S."/>
            <person name="White O."/>
            <person name="Alonso J."/>
            <person name="Altafi H."/>
            <person name="Araujo R."/>
            <person name="Bowman C.L."/>
            <person name="Brooks S.Y."/>
            <person name="Buehler E."/>
            <person name="Chan A."/>
            <person name="Chao Q."/>
            <person name="Chen H."/>
            <person name="Cheuk R.F."/>
            <person name="Chin C.W."/>
            <person name="Chung M.K."/>
            <person name="Conn L."/>
            <person name="Conway A.B."/>
            <person name="Conway A.R."/>
            <person name="Creasy T.H."/>
            <person name="Dewar K."/>
            <person name="Dunn P."/>
            <person name="Etgu P."/>
            <person name="Feldblyum T.V."/>
            <person name="Feng J.-D."/>
            <person name="Fong B."/>
            <person name="Fujii C.Y."/>
            <person name="Gill J.E."/>
            <person name="Goldsmith A.D."/>
            <person name="Haas B."/>
            <person name="Hansen N.F."/>
            <person name="Hughes B."/>
            <person name="Huizar L."/>
            <person name="Hunter J.L."/>
            <person name="Jenkins J."/>
            <person name="Johnson-Hopson C."/>
            <person name="Khan S."/>
            <person name="Khaykin E."/>
            <person name="Kim C.J."/>
            <person name="Koo H.L."/>
            <person name="Kremenetskaia I."/>
            <person name="Kurtz D.B."/>
            <person name="Kwan A."/>
            <person name="Lam B."/>
            <person name="Langin-Hooper S."/>
            <person name="Lee A."/>
            <person name="Lee J.M."/>
            <person name="Lenz C.A."/>
            <person name="Li J.H."/>
            <person name="Li Y.-P."/>
            <person name="Lin X."/>
            <person name="Liu S.X."/>
            <person name="Liu Z.A."/>
            <person name="Luros J.S."/>
            <person name="Maiti R."/>
            <person name="Marziali A."/>
            <person name="Militscher J."/>
            <person name="Miranda M."/>
            <person name="Nguyen M."/>
            <person name="Nierman W.C."/>
            <person name="Osborne B.I."/>
            <person name="Pai G."/>
            <person name="Peterson J."/>
            <person name="Pham P.K."/>
            <person name="Rizzo M."/>
            <person name="Rooney T."/>
            <person name="Rowley D."/>
            <person name="Sakano H."/>
            <person name="Salzberg S.L."/>
            <person name="Schwartz J.R."/>
            <person name="Shinn P."/>
            <person name="Southwick A.M."/>
            <person name="Sun H."/>
            <person name="Tallon L.J."/>
            <person name="Tambunga G."/>
            <person name="Toriumi M.J."/>
            <person name="Town C.D."/>
            <person name="Utterback T."/>
            <person name="Van Aken S."/>
            <person name="Vaysberg M."/>
            <person name="Vysotskaia V.S."/>
            <person name="Walker M."/>
            <person name="Wu D."/>
            <person name="Yu G."/>
            <person name="Fraser C.M."/>
            <person name="Venter J.C."/>
            <person name="Davis R.W."/>
        </authorList>
    </citation>
    <scope>NUCLEOTIDE SEQUENCE [LARGE SCALE GENOMIC DNA]</scope>
    <source>
        <strain>cv. Columbia</strain>
    </source>
</reference>
<reference key="2">
    <citation type="journal article" date="2017" name="Plant J.">
        <title>Araport11: a complete reannotation of the Arabidopsis thaliana reference genome.</title>
        <authorList>
            <person name="Cheng C.Y."/>
            <person name="Krishnakumar V."/>
            <person name="Chan A.P."/>
            <person name="Thibaud-Nissen F."/>
            <person name="Schobel S."/>
            <person name="Town C.D."/>
        </authorList>
    </citation>
    <scope>GENOME REANNOTATION</scope>
    <source>
        <strain>cv. Columbia</strain>
    </source>
</reference>
<reference key="3">
    <citation type="journal article" date="2003" name="Science">
        <title>Empirical analysis of transcriptional activity in the Arabidopsis genome.</title>
        <authorList>
            <person name="Yamada K."/>
            <person name="Lim J."/>
            <person name="Dale J.M."/>
            <person name="Chen H."/>
            <person name="Shinn P."/>
            <person name="Palm C.J."/>
            <person name="Southwick A.M."/>
            <person name="Wu H.C."/>
            <person name="Kim C.J."/>
            <person name="Nguyen M."/>
            <person name="Pham P.K."/>
            <person name="Cheuk R.F."/>
            <person name="Karlin-Newmann G."/>
            <person name="Liu S.X."/>
            <person name="Lam B."/>
            <person name="Sakano H."/>
            <person name="Wu T."/>
            <person name="Yu G."/>
            <person name="Miranda M."/>
            <person name="Quach H.L."/>
            <person name="Tripp M."/>
            <person name="Chang C.H."/>
            <person name="Lee J.M."/>
            <person name="Toriumi M.J."/>
            <person name="Chan M.M."/>
            <person name="Tang C.C."/>
            <person name="Onodera C.S."/>
            <person name="Deng J.M."/>
            <person name="Akiyama K."/>
            <person name="Ansari Y."/>
            <person name="Arakawa T."/>
            <person name="Banh J."/>
            <person name="Banno F."/>
            <person name="Bowser L."/>
            <person name="Brooks S.Y."/>
            <person name="Carninci P."/>
            <person name="Chao Q."/>
            <person name="Choy N."/>
            <person name="Enju A."/>
            <person name="Goldsmith A.D."/>
            <person name="Gurjal M."/>
            <person name="Hansen N.F."/>
            <person name="Hayashizaki Y."/>
            <person name="Johnson-Hopson C."/>
            <person name="Hsuan V.W."/>
            <person name="Iida K."/>
            <person name="Karnes M."/>
            <person name="Khan S."/>
            <person name="Koesema E."/>
            <person name="Ishida J."/>
            <person name="Jiang P.X."/>
            <person name="Jones T."/>
            <person name="Kawai J."/>
            <person name="Kamiya A."/>
            <person name="Meyers C."/>
            <person name="Nakajima M."/>
            <person name="Narusaka M."/>
            <person name="Seki M."/>
            <person name="Sakurai T."/>
            <person name="Satou M."/>
            <person name="Tamse R."/>
            <person name="Vaysberg M."/>
            <person name="Wallender E.K."/>
            <person name="Wong C."/>
            <person name="Yamamura Y."/>
            <person name="Yuan S."/>
            <person name="Shinozaki K."/>
            <person name="Davis R.W."/>
            <person name="Theologis A."/>
            <person name="Ecker J.R."/>
        </authorList>
    </citation>
    <scope>NUCLEOTIDE SEQUENCE [LARGE SCALE MRNA]</scope>
    <source>
        <strain>cv. Columbia</strain>
    </source>
</reference>
<reference key="4">
    <citation type="submission" date="2006-07" db="EMBL/GenBank/DDBJ databases">
        <title>Large-scale analysis of RIKEN Arabidopsis full-length (RAFL) cDNAs.</title>
        <authorList>
            <person name="Totoki Y."/>
            <person name="Seki M."/>
            <person name="Ishida J."/>
            <person name="Nakajima M."/>
            <person name="Enju A."/>
            <person name="Kamiya A."/>
            <person name="Narusaka M."/>
            <person name="Shin-i T."/>
            <person name="Nakagawa M."/>
            <person name="Sakamoto N."/>
            <person name="Oishi K."/>
            <person name="Kohara Y."/>
            <person name="Kobayashi M."/>
            <person name="Toyoda A."/>
            <person name="Sakaki Y."/>
            <person name="Sakurai T."/>
            <person name="Iida K."/>
            <person name="Akiyama K."/>
            <person name="Satou M."/>
            <person name="Toyoda T."/>
            <person name="Konagaya A."/>
            <person name="Carninci P."/>
            <person name="Kawai J."/>
            <person name="Hayashizaki Y."/>
            <person name="Shinozaki K."/>
        </authorList>
    </citation>
    <scope>NUCLEOTIDE SEQUENCE [LARGE SCALE MRNA]</scope>
    <source>
        <strain>cv. Columbia</strain>
    </source>
</reference>
<reference key="5">
    <citation type="journal article" date="1998" name="Mol. Gen. Genet.">
        <title>A conserved BURP domain defines a novel group of plant proteins with unusual primary structures.</title>
        <authorList>
            <person name="Hattori J."/>
            <person name="Boutilier K.A."/>
            <person name="van Lookeren Campagne M.M."/>
            <person name="Miki B.L."/>
        </authorList>
    </citation>
    <scope>DOMAIN</scope>
</reference>
<reference key="6">
    <citation type="journal article" date="2009" name="Plant Mol. Biol.">
        <title>The BURP domain protein AtUSPL1 of Arabidopsis thaliana is destined to the protein storage vacuoles and overexpression of the cognate gene distorts seed development.</title>
        <authorList>
            <person name="Van Son L."/>
            <person name="Tiedemann J."/>
            <person name="Rutten T."/>
            <person name="Hillmer S."/>
            <person name="Hinz G."/>
            <person name="Zank T."/>
            <person name="Manteuffel R."/>
            <person name="Baeumlein H."/>
        </authorList>
    </citation>
    <scope>GENE FAMILY</scope>
    <scope>NOMENCLATURE</scope>
    <scope>FUNCTION</scope>
    <scope>DEVELOPMENTAL STAGE</scope>
    <scope>SUBCELLULAR LOCATION</scope>
    <scope>DISRUPTION PHENOTYPE</scope>
</reference>
<reference key="7">
    <citation type="journal article" date="2009" name="Plant Mol. Biol.">
        <title>Protein storage vacuoles of Brassica napus zygotic embryos accumulate a BURP domain protein and perturbation of its production distorts the PSV.</title>
        <authorList>
            <person name="Teerawanichpan P."/>
            <person name="Xia Q."/>
            <person name="Caldwell S.J."/>
            <person name="Datla R."/>
            <person name="Selvaraj G."/>
        </authorList>
    </citation>
    <scope>TISSUE SPECIFICITY</scope>
</reference>
<reference key="8">
    <citation type="journal article" date="2014" name="PLoS ONE">
        <title>AtRD22 and AtUSPL1, members of the plant-specific BURP domain family involved in Arabidopsis thaliana drought tolerance.</title>
        <authorList>
            <person name="Harshavardhan V.T."/>
            <person name="Van Son L."/>
            <person name="Seiler C."/>
            <person name="Junker A."/>
            <person name="Weigelt-Fischer K."/>
            <person name="Klukas C."/>
            <person name="Altmann T."/>
            <person name="Sreenivasulu N."/>
            <person name="Baeumlein H."/>
            <person name="Kuhlmann M."/>
        </authorList>
    </citation>
    <scope>TISSUE SPECIFICITY</scope>
    <scope>INDUCTION</scope>
    <scope>DISRUPTION PHENOTYPE</scope>
    <source>
        <strain>cv. Columbia</strain>
    </source>
</reference>
<reference key="9">
    <citation type="journal article" date="2015" name="Front. Plant Sci.">
        <title>AtPGL3 is an Arabidopsis BURP domain protein that is localized to the cell wall and promotes cell enlargement.</title>
        <authorList>
            <person name="Park J."/>
            <person name="Cui Y."/>
            <person name="Kang B.H."/>
        </authorList>
    </citation>
    <scope>GENE FAMILY</scope>
    <scope>NOMENCLATURE</scope>
</reference>
<evidence type="ECO:0000255" key="1"/>
<evidence type="ECO:0000255" key="2">
    <source>
        <dbReference type="PROSITE-ProRule" id="PRU00604"/>
    </source>
</evidence>
<evidence type="ECO:0000269" key="3">
    <source>
    </source>
</evidence>
<evidence type="ECO:0000269" key="4">
    <source>
    </source>
</evidence>
<evidence type="ECO:0000269" key="5">
    <source>
    </source>
</evidence>
<evidence type="ECO:0000269" key="6">
    <source>
    </source>
</evidence>
<evidence type="ECO:0000303" key="7">
    <source>
    </source>
</evidence>
<evidence type="ECO:0000312" key="8">
    <source>
        <dbReference type="Araport" id="AT1G49320"/>
    </source>
</evidence>
<evidence type="ECO:0000312" key="9">
    <source>
        <dbReference type="EMBL" id="AAD43166.1"/>
    </source>
</evidence>
<organism>
    <name type="scientific">Arabidopsis thaliana</name>
    <name type="common">Mouse-ear cress</name>
    <dbReference type="NCBI Taxonomy" id="3702"/>
    <lineage>
        <taxon>Eukaryota</taxon>
        <taxon>Viridiplantae</taxon>
        <taxon>Streptophyta</taxon>
        <taxon>Embryophyta</taxon>
        <taxon>Tracheophyta</taxon>
        <taxon>Spermatophyta</taxon>
        <taxon>Magnoliopsida</taxon>
        <taxon>eudicotyledons</taxon>
        <taxon>Gunneridae</taxon>
        <taxon>Pentapetalae</taxon>
        <taxon>rosids</taxon>
        <taxon>malvids</taxon>
        <taxon>Brassicales</taxon>
        <taxon>Brassicaceae</taxon>
        <taxon>Camelineae</taxon>
        <taxon>Arabidopsis</taxon>
    </lineage>
</organism>
<protein>
    <recommendedName>
        <fullName evidence="7">BURP domain protein USPL1</fullName>
    </recommendedName>
    <alternativeName>
        <fullName evidence="7">Unknown seed protein-like protein 1</fullName>
        <shortName evidence="7">AtUSPL1</shortName>
    </alternativeName>
</protein>
<accession>Q9XI99</accession>
<keyword id="KW-0333">Golgi apparatus</keyword>
<keyword id="KW-1185">Reference proteome</keyword>
<keyword id="KW-0732">Signal</keyword>
<keyword id="KW-0926">Vacuole</keyword>
<sequence>MASTFRLSISFLTLILFSLWVVEAHTSRKLISIKEKEGQDISHLLKDGEFDDPSLYMYFTLNDLKLGTKLLIYFYKNDLQKLPPLLTRQQADLIPFTKSKLDFLLDHFSITKDSPQGKAIKETLGHCDAKAIEGEHKFCGTSLESLIDLVKKTMGYNVDLKVMTTKVMVPAQNSISYALHNYTFVEAPKELVGIKMLGCHRMPYPYAVYYCHGHKGGSRVFEVNLVTDDGRQRVVGPAVCHMDTSTWDADHVAFKVLKMEPRSAPVCHFFPLDNIVWVTK</sequence>
<proteinExistence type="evidence at transcript level"/>
<comment type="function">
    <text evidence="3">Associated with the protein storage vacuole formation.</text>
</comment>
<comment type="subcellular location">
    <subcellularLocation>
        <location evidence="3">Protein storage vacuole</location>
    </subcellularLocation>
    <subcellularLocation>
        <location evidence="3">Golgi apparatus</location>
        <location evidence="3">Golgi stack</location>
    </subcellularLocation>
    <subcellularLocation>
        <location evidence="3">Golgi apparatus</location>
        <location evidence="3">trans-Golgi network</location>
    </subcellularLocation>
    <subcellularLocation>
        <location evidence="3">Prevacuolar compartment</location>
    </subcellularLocation>
</comment>
<comment type="tissue specificity">
    <text evidence="4 5">Expressed in cotyledons, radicle, floral buds, open flowers, roots and developing seeds, but not in leaves (PubMed:19714473). Highly expressed in the root tips. Detected in young leaves, hypocotyls, stems and mature seed funiculum (PubMed:25333723).</text>
</comment>
<comment type="developmental stage">
    <text evidence="3">Expressed in embryos at the cotyledon stage.</text>
</comment>
<comment type="induction">
    <text evidence="5">Up-regulated in the root by dehydration, salt stress, osmotic stress, high temperature and abscisic acid.</text>
</comment>
<comment type="domain">
    <text evidence="6">The BURP domain located at the C-terminus has not been identified in non-plant proteins.</text>
</comment>
<comment type="disruption phenotype">
    <text evidence="3 5">No visible effect on seed development, but significant reduction of 11S seed storage protein content in the mature seeds (PubMed:19639386). Enhanced drought tolerance (PubMed:25333723).</text>
</comment>
<dbReference type="EMBL" id="AC007504">
    <property type="protein sequence ID" value="AAD43166.1"/>
    <property type="molecule type" value="Genomic_DNA"/>
</dbReference>
<dbReference type="EMBL" id="CP002684">
    <property type="protein sequence ID" value="AEE32417.1"/>
    <property type="molecule type" value="Genomic_DNA"/>
</dbReference>
<dbReference type="EMBL" id="BT006428">
    <property type="protein sequence ID" value="AAP21236.1"/>
    <property type="molecule type" value="mRNA"/>
</dbReference>
<dbReference type="EMBL" id="AK227709">
    <property type="protein sequence ID" value="BAE99695.1"/>
    <property type="molecule type" value="mRNA"/>
</dbReference>
<dbReference type="PIR" id="D96529">
    <property type="entry name" value="D96529"/>
</dbReference>
<dbReference type="RefSeq" id="NP_175357.1">
    <property type="nucleotide sequence ID" value="NM_103822.3"/>
</dbReference>
<dbReference type="SMR" id="Q9XI99"/>
<dbReference type="FunCoup" id="Q9XI99">
    <property type="interactions" value="20"/>
</dbReference>
<dbReference type="STRING" id="3702.Q9XI99"/>
<dbReference type="PaxDb" id="3702-AT1G49320.1"/>
<dbReference type="ProteomicsDB" id="228605"/>
<dbReference type="EnsemblPlants" id="AT1G49320.1">
    <property type="protein sequence ID" value="AT1G49320.1"/>
    <property type="gene ID" value="AT1G49320"/>
</dbReference>
<dbReference type="GeneID" id="841355"/>
<dbReference type="Gramene" id="AT1G49320.1">
    <property type="protein sequence ID" value="AT1G49320.1"/>
    <property type="gene ID" value="AT1G49320"/>
</dbReference>
<dbReference type="KEGG" id="ath:AT1G49320"/>
<dbReference type="Araport" id="AT1G49320"/>
<dbReference type="TAIR" id="AT1G49320">
    <property type="gene designation" value="USPL1"/>
</dbReference>
<dbReference type="eggNOG" id="ENOG502QU5J">
    <property type="taxonomic scope" value="Eukaryota"/>
</dbReference>
<dbReference type="HOGENOM" id="CLU_011822_0_0_1"/>
<dbReference type="InParanoid" id="Q9XI99"/>
<dbReference type="OMA" id="DNIVWVT"/>
<dbReference type="OrthoDB" id="1909293at2759"/>
<dbReference type="PhylomeDB" id="Q9XI99"/>
<dbReference type="PRO" id="PR:Q9XI99"/>
<dbReference type="Proteomes" id="UP000006548">
    <property type="component" value="Chromosome 1"/>
</dbReference>
<dbReference type="ExpressionAtlas" id="Q9XI99">
    <property type="expression patterns" value="baseline and differential"/>
</dbReference>
<dbReference type="GO" id="GO:0005795">
    <property type="term" value="C:Golgi stack"/>
    <property type="evidence" value="ECO:0007669"/>
    <property type="project" value="UniProtKB-SubCell"/>
</dbReference>
<dbReference type="GO" id="GO:0000326">
    <property type="term" value="C:protein storage vacuole"/>
    <property type="evidence" value="ECO:0000314"/>
    <property type="project" value="TAIR"/>
</dbReference>
<dbReference type="GO" id="GO:0048316">
    <property type="term" value="P:seed development"/>
    <property type="evidence" value="ECO:0000315"/>
    <property type="project" value="TAIR"/>
</dbReference>
<dbReference type="InterPro" id="IPR044816">
    <property type="entry name" value="BURP"/>
</dbReference>
<dbReference type="InterPro" id="IPR004873">
    <property type="entry name" value="BURP_dom"/>
</dbReference>
<dbReference type="PANTHER" id="PTHR31236:SF41">
    <property type="entry name" value="BURP DOMAIN PROTEIN USPL1"/>
    <property type="match status" value="1"/>
</dbReference>
<dbReference type="PANTHER" id="PTHR31236">
    <property type="entry name" value="BURP DOMAIN PROTEIN USPL1-LIKE"/>
    <property type="match status" value="1"/>
</dbReference>
<dbReference type="Pfam" id="PF03181">
    <property type="entry name" value="BURP"/>
    <property type="match status" value="1"/>
</dbReference>
<dbReference type="SMART" id="SM01045">
    <property type="entry name" value="BURP"/>
    <property type="match status" value="1"/>
</dbReference>
<dbReference type="PROSITE" id="PS51277">
    <property type="entry name" value="BURP"/>
    <property type="match status" value="1"/>
</dbReference>